<organism>
    <name type="scientific">Arabidopsis thaliana</name>
    <name type="common">Mouse-ear cress</name>
    <dbReference type="NCBI Taxonomy" id="3702"/>
    <lineage>
        <taxon>Eukaryota</taxon>
        <taxon>Viridiplantae</taxon>
        <taxon>Streptophyta</taxon>
        <taxon>Embryophyta</taxon>
        <taxon>Tracheophyta</taxon>
        <taxon>Spermatophyta</taxon>
        <taxon>Magnoliopsida</taxon>
        <taxon>eudicotyledons</taxon>
        <taxon>Gunneridae</taxon>
        <taxon>Pentapetalae</taxon>
        <taxon>rosids</taxon>
        <taxon>malvids</taxon>
        <taxon>Brassicales</taxon>
        <taxon>Brassicaceae</taxon>
        <taxon>Camelineae</taxon>
        <taxon>Arabidopsis</taxon>
    </lineage>
</organism>
<protein>
    <recommendedName>
        <fullName>Dynamin-related protein 3B</fullName>
    </recommendedName>
    <alternativeName>
        <fullName>Dynamin-like protein 2b</fullName>
    </alternativeName>
</protein>
<reference key="1">
    <citation type="journal article" date="2002" name="Proc. Natl. Acad. Sci. U.S.A.">
        <title>A dynamin-like protein (ADL2b), rather than FtsZ, is involved in Arabidopsis mitochondrial division.</title>
        <authorList>
            <person name="Arimura S."/>
            <person name="Tsutsumi N."/>
        </authorList>
    </citation>
    <scope>NUCLEOTIDE SEQUENCE [MRNA] (ISOFORM 1)</scope>
    <source>
        <strain>cv. Columbia</strain>
    </source>
</reference>
<reference key="2">
    <citation type="journal article" date="1999" name="Nature">
        <title>Sequence and analysis of chromosome 2 of the plant Arabidopsis thaliana.</title>
        <authorList>
            <person name="Lin X."/>
            <person name="Kaul S."/>
            <person name="Rounsley S.D."/>
            <person name="Shea T.P."/>
            <person name="Benito M.-I."/>
            <person name="Town C.D."/>
            <person name="Fujii C.Y."/>
            <person name="Mason T.M."/>
            <person name="Bowman C.L."/>
            <person name="Barnstead M.E."/>
            <person name="Feldblyum T.V."/>
            <person name="Buell C.R."/>
            <person name="Ketchum K.A."/>
            <person name="Lee J.J."/>
            <person name="Ronning C.M."/>
            <person name="Koo H.L."/>
            <person name="Moffat K.S."/>
            <person name="Cronin L.A."/>
            <person name="Shen M."/>
            <person name="Pai G."/>
            <person name="Van Aken S."/>
            <person name="Umayam L."/>
            <person name="Tallon L.J."/>
            <person name="Gill J.E."/>
            <person name="Adams M.D."/>
            <person name="Carrera A.J."/>
            <person name="Creasy T.H."/>
            <person name="Goodman H.M."/>
            <person name="Somerville C.R."/>
            <person name="Copenhaver G.P."/>
            <person name="Preuss D."/>
            <person name="Nierman W.C."/>
            <person name="White O."/>
            <person name="Eisen J.A."/>
            <person name="Salzberg S.L."/>
            <person name="Fraser C.M."/>
            <person name="Venter J.C."/>
        </authorList>
    </citation>
    <scope>NUCLEOTIDE SEQUENCE [LARGE SCALE GENOMIC DNA]</scope>
    <source>
        <strain>cv. Columbia</strain>
    </source>
</reference>
<reference key="3">
    <citation type="journal article" date="2017" name="Plant J.">
        <title>Araport11: a complete reannotation of the Arabidopsis thaliana reference genome.</title>
        <authorList>
            <person name="Cheng C.Y."/>
            <person name="Krishnakumar V."/>
            <person name="Chan A.P."/>
            <person name="Thibaud-Nissen F."/>
            <person name="Schobel S."/>
            <person name="Town C.D."/>
        </authorList>
    </citation>
    <scope>GENOME REANNOTATION</scope>
    <source>
        <strain>cv. Columbia</strain>
    </source>
</reference>
<reference key="4">
    <citation type="journal article" date="2003" name="Science">
        <title>Empirical analysis of transcriptional activity in the Arabidopsis genome.</title>
        <authorList>
            <person name="Yamada K."/>
            <person name="Lim J."/>
            <person name="Dale J.M."/>
            <person name="Chen H."/>
            <person name="Shinn P."/>
            <person name="Palm C.J."/>
            <person name="Southwick A.M."/>
            <person name="Wu H.C."/>
            <person name="Kim C.J."/>
            <person name="Nguyen M."/>
            <person name="Pham P.K."/>
            <person name="Cheuk R.F."/>
            <person name="Karlin-Newmann G."/>
            <person name="Liu S.X."/>
            <person name="Lam B."/>
            <person name="Sakano H."/>
            <person name="Wu T."/>
            <person name="Yu G."/>
            <person name="Miranda M."/>
            <person name="Quach H.L."/>
            <person name="Tripp M."/>
            <person name="Chang C.H."/>
            <person name="Lee J.M."/>
            <person name="Toriumi M.J."/>
            <person name="Chan M.M."/>
            <person name="Tang C.C."/>
            <person name="Onodera C.S."/>
            <person name="Deng J.M."/>
            <person name="Akiyama K."/>
            <person name="Ansari Y."/>
            <person name="Arakawa T."/>
            <person name="Banh J."/>
            <person name="Banno F."/>
            <person name="Bowser L."/>
            <person name="Brooks S.Y."/>
            <person name="Carninci P."/>
            <person name="Chao Q."/>
            <person name="Choy N."/>
            <person name="Enju A."/>
            <person name="Goldsmith A.D."/>
            <person name="Gurjal M."/>
            <person name="Hansen N.F."/>
            <person name="Hayashizaki Y."/>
            <person name="Johnson-Hopson C."/>
            <person name="Hsuan V.W."/>
            <person name="Iida K."/>
            <person name="Karnes M."/>
            <person name="Khan S."/>
            <person name="Koesema E."/>
            <person name="Ishida J."/>
            <person name="Jiang P.X."/>
            <person name="Jones T."/>
            <person name="Kawai J."/>
            <person name="Kamiya A."/>
            <person name="Meyers C."/>
            <person name="Nakajima M."/>
            <person name="Narusaka M."/>
            <person name="Seki M."/>
            <person name="Sakurai T."/>
            <person name="Satou M."/>
            <person name="Tamse R."/>
            <person name="Vaysberg M."/>
            <person name="Wallender E.K."/>
            <person name="Wong C."/>
            <person name="Yamamura Y."/>
            <person name="Yuan S."/>
            <person name="Shinozaki K."/>
            <person name="Davis R.W."/>
            <person name="Theologis A."/>
            <person name="Ecker J.R."/>
        </authorList>
    </citation>
    <scope>NUCLEOTIDE SEQUENCE [LARGE SCALE MRNA] (ISOFORM 1)</scope>
    <source>
        <strain>cv. Columbia</strain>
    </source>
</reference>
<reference key="5">
    <citation type="submission" date="2002-03" db="EMBL/GenBank/DDBJ databases">
        <title>Full-length cDNA from Arabidopsis thaliana.</title>
        <authorList>
            <person name="Brover V.V."/>
            <person name="Troukhan M.E."/>
            <person name="Alexandrov N.A."/>
            <person name="Lu Y.-P."/>
            <person name="Flavell R.B."/>
            <person name="Feldmann K.A."/>
        </authorList>
    </citation>
    <scope>NUCLEOTIDE SEQUENCE [LARGE SCALE MRNA] (ISOFORM 2)</scope>
</reference>
<reference key="6">
    <citation type="journal article" date="2003" name="Plant Mol. Biol.">
        <title>A unified nomenclature for Arabidopsis dynamin-related large GTPases based on homology and possible functions.</title>
        <authorList>
            <person name="Hong Z."/>
            <person name="Bednarek S.Y."/>
            <person name="Blumwald E."/>
            <person name="Hwang I."/>
            <person name="Jurgens G."/>
            <person name="Menzel D."/>
            <person name="Osteryoung K.W."/>
            <person name="Raikhel N.V."/>
            <person name="Shinozaki K."/>
            <person name="Tsutsumi N."/>
            <person name="Verma D.P.S."/>
        </authorList>
    </citation>
    <scope>GENE FAMILY</scope>
    <scope>NOMENCLATURE</scope>
</reference>
<reference key="7">
    <citation type="journal article" date="2004" name="J. Exp. Bot.">
        <title>ADL2a, like ADL2b, is involved in the control of higher plant mitochondrial morphology.</title>
        <authorList>
            <person name="Logan D.C."/>
            <person name="Scott I."/>
            <person name="Tobin A.K."/>
        </authorList>
    </citation>
    <scope>FUNCTION</scope>
</reference>
<reference key="8">
    <citation type="journal article" date="2004" name="Plant Cell Physiol.">
        <title>Arabidopsis dynamin-like protein 2a (ADL2a), like ADL2b, is involved in plant mitochondrial division.</title>
        <authorList>
            <person name="Arimura S."/>
            <person name="Aida G.P."/>
            <person name="Fujimoto M."/>
            <person name="Nakazono M."/>
            <person name="Tsutsumi N."/>
        </authorList>
    </citation>
    <scope>FUNCTION</scope>
    <scope>SUBCELLULAR LOCATION</scope>
</reference>
<reference key="9">
    <citation type="journal article" date="2008" name="Plant Cell">
        <title>Arabidopsis ELONGATED MITOCHONDRIA1 is required for localization of DYNAMIN-RELATED PROTEIN3A to mitochondrial fission sites.</title>
        <authorList>
            <person name="Arimura S."/>
            <person name="Fujimoto M."/>
            <person name="Doniwa Y."/>
            <person name="Kadoya N."/>
            <person name="Nakazono M."/>
            <person name="Sakamoto W."/>
            <person name="Tsutsumi N."/>
        </authorList>
    </citation>
    <scope>INTERACTION WITH ELM1</scope>
</reference>
<reference key="10">
    <citation type="journal article" date="2009" name="Plant J.">
        <title>Two small protein families, DYNAMIN-RELATED PROTEIN3 and FISSION1, are required for peroxisome fission in Arabidopsis.</title>
        <authorList>
            <person name="Zhang X."/>
            <person name="Hu J."/>
        </authorList>
    </citation>
    <scope>FUNCTION</scope>
    <scope>SUBCELLULAR LOCATION</scope>
    <scope>DISRUPTION PHENOTYPE</scope>
</reference>
<reference key="11">
    <citation type="journal article" date="2010" name="Plant Cell">
        <title>The Arabidopsis chloroplast division protein DYNAMIN-RELATED PROTEIN5B also mediates peroxisome division.</title>
        <authorList>
            <person name="Zhang X."/>
            <person name="Hu J."/>
        </authorList>
    </citation>
    <scope>INTERACTION WITH ARC5</scope>
    <scope>SUBCELLULAR LOCATION</scope>
</reference>
<reference key="12">
    <citation type="journal article" date="2012" name="Mol. Cell. Proteomics">
        <title>Comparative large-scale characterisation of plant vs. mammal proteins reveals similar and idiosyncratic N-alpha acetylation features.</title>
        <authorList>
            <person name="Bienvenut W.V."/>
            <person name="Sumpton D."/>
            <person name="Martinez A."/>
            <person name="Lilla S."/>
            <person name="Espagne C."/>
            <person name="Meinnel T."/>
            <person name="Giglione C."/>
        </authorList>
    </citation>
    <scope>ACETYLATION [LARGE SCALE ANALYSIS] AT SER-2</scope>
    <scope>CLEAVAGE OF INITIATOR METHIONINE [LARGE SCALE ANALYSIS]</scope>
    <scope>IDENTIFICATION BY MASS SPECTROMETRY [LARGE SCALE ANALYSIS]</scope>
</reference>
<proteinExistence type="evidence at protein level"/>
<keyword id="KW-0007">Acetylation</keyword>
<keyword id="KW-0025">Alternative splicing</keyword>
<keyword id="KW-0131">Cell cycle</keyword>
<keyword id="KW-0132">Cell division</keyword>
<keyword id="KW-0342">GTP-binding</keyword>
<keyword id="KW-0378">Hydrolase</keyword>
<keyword id="KW-0496">Mitochondrion</keyword>
<keyword id="KW-0505">Motor protein</keyword>
<keyword id="KW-0547">Nucleotide-binding</keyword>
<keyword id="KW-0576">Peroxisome</keyword>
<keyword id="KW-0962">Peroxisome biogenesis</keyword>
<keyword id="KW-1185">Reference proteome</keyword>
<feature type="initiator methionine" description="Removed" evidence="13">
    <location>
        <position position="1"/>
    </location>
</feature>
<feature type="chain" id="PRO_0000206585" description="Dynamin-related protein 3B">
    <location>
        <begin position="2"/>
        <end position="780"/>
    </location>
</feature>
<feature type="domain" description="Dynamin-type G" evidence="4">
    <location>
        <begin position="40"/>
        <end position="315"/>
    </location>
</feature>
<feature type="domain" description="GED" evidence="3">
    <location>
        <begin position="654"/>
        <end position="745"/>
    </location>
</feature>
<feature type="region of interest" description="G1 motif" evidence="4">
    <location>
        <begin position="50"/>
        <end position="57"/>
    </location>
</feature>
<feature type="region of interest" description="G2 motif" evidence="4">
    <location>
        <begin position="76"/>
        <end position="78"/>
    </location>
</feature>
<feature type="region of interest" description="G3 motif" evidence="4">
    <location>
        <begin position="157"/>
        <end position="160"/>
    </location>
</feature>
<feature type="region of interest" description="G4 motif" evidence="4">
    <location>
        <begin position="226"/>
        <end position="229"/>
    </location>
</feature>
<feature type="region of interest" description="G5 motif" evidence="4">
    <location>
        <begin position="256"/>
        <end position="259"/>
    </location>
</feature>
<feature type="region of interest" description="Disordered" evidence="5">
    <location>
        <begin position="536"/>
        <end position="558"/>
    </location>
</feature>
<feature type="region of interest" description="Disordered" evidence="5">
    <location>
        <begin position="573"/>
        <end position="592"/>
    </location>
</feature>
<feature type="region of interest" description="Disordered" evidence="5">
    <location>
        <begin position="753"/>
        <end position="780"/>
    </location>
</feature>
<feature type="compositionally biased region" description="Basic and acidic residues" evidence="5">
    <location>
        <begin position="539"/>
        <end position="548"/>
    </location>
</feature>
<feature type="compositionally biased region" description="Polar residues" evidence="5">
    <location>
        <begin position="549"/>
        <end position="558"/>
    </location>
</feature>
<feature type="compositionally biased region" description="Basic and acidic residues" evidence="5">
    <location>
        <begin position="753"/>
        <end position="770"/>
    </location>
</feature>
<feature type="compositionally biased region" description="Polar residues" evidence="5">
    <location>
        <begin position="771"/>
        <end position="780"/>
    </location>
</feature>
<feature type="binding site" evidence="2">
    <location>
        <begin position="50"/>
        <end position="57"/>
    </location>
    <ligand>
        <name>GTP</name>
        <dbReference type="ChEBI" id="CHEBI:37565"/>
    </ligand>
</feature>
<feature type="binding site" evidence="1">
    <location>
        <begin position="157"/>
        <end position="161"/>
    </location>
    <ligand>
        <name>GTP</name>
        <dbReference type="ChEBI" id="CHEBI:37565"/>
    </ligand>
</feature>
<feature type="binding site" evidence="1">
    <location>
        <begin position="226"/>
        <end position="229"/>
    </location>
    <ligand>
        <name>GTP</name>
        <dbReference type="ChEBI" id="CHEBI:37565"/>
    </ligand>
</feature>
<feature type="modified residue" description="N-acetylserine" evidence="13">
    <location>
        <position position="2"/>
    </location>
</feature>
<feature type="splice variant" id="VSP_012757" description="In isoform 2." evidence="11">
    <original>GGQGALLLSFITKYCEAYSSTLEGKSKE</original>
    <variation>VCGFWPVLALYIPSILNDGIAICFFCVV</variation>
    <location>
        <begin position="343"/>
        <end position="370"/>
    </location>
</feature>
<feature type="splice variant" id="VSP_012758" description="In isoform 2." evidence="11">
    <location>
        <begin position="371"/>
        <end position="780"/>
    </location>
</feature>
<feature type="sequence conflict" description="In Ref. 1; BAB85645." evidence="12" ref="1">
    <original>S</original>
    <variation>P</variation>
    <location>
        <position position="96"/>
    </location>
</feature>
<feature type="sequence conflict" description="In Ref. 4; AAM20619." evidence="12" ref="4">
    <original>N</original>
    <variation>S</variation>
    <location>
        <position position="204"/>
    </location>
</feature>
<feature type="sequence conflict" description="In Ref. 5; AAM61220." evidence="12" ref="5">
    <original>V</original>
    <variation>I</variation>
    <location sequence="Q8LFT2-2">
        <position position="369"/>
    </location>
</feature>
<comment type="function">
    <text evidence="6 7 9">Involved in the control of mitochondrial and peroxisomal division and morphology.</text>
</comment>
<comment type="subunit">
    <text evidence="8 10">Interacts with ARC5 on peroxisomes and ELM1 on mitochondria.</text>
</comment>
<comment type="interaction">
    <interactant intactId="EBI-2265511">
        <id>Q8LFT2</id>
    </interactant>
    <interactant intactId="EBI-2265428">
        <id>Q8S944</id>
        <label>DRP3A</label>
    </interactant>
    <organismsDiffer>false</organismsDiffer>
    <experiments>6</experiments>
</comment>
<comment type="interaction">
    <interactant intactId="EBI-2265511">
        <id>Q8LFT2</id>
    </interactant>
    <interactant intactId="EBI-5849461">
        <id>P94077</id>
        <label>LSD1</label>
    </interactant>
    <organismsDiffer>false</organismsDiffer>
    <experiments>3</experiments>
</comment>
<comment type="subcellular location">
    <subcellularLocation>
        <location evidence="7">Mitochondrion</location>
    </subcellularLocation>
    <subcellularLocation>
        <location evidence="9 10">Peroxisome</location>
    </subcellularLocation>
</comment>
<comment type="alternative products">
    <event type="alternative splicing"/>
    <isoform>
        <id>Q8LFT2-1</id>
        <name>1</name>
        <sequence type="displayed"/>
    </isoform>
    <isoform>
        <id>Q8LFT2-2</id>
        <name>2</name>
        <sequence type="described" ref="VSP_012757 VSP_012758"/>
    </isoform>
</comment>
<comment type="disruption phenotype">
    <text evidence="9">Reduced plant growth. Increase in the size of peroxisomes and decrease in the number of peroxisomes per cell.</text>
</comment>
<comment type="miscellaneous">
    <molecule>Isoform 2</molecule>
    <text evidence="12">May be due to an intron retention.</text>
</comment>
<comment type="similarity">
    <text evidence="4">Belongs to the TRAFAC class dynamin-like GTPase superfamily. Dynamin/Fzo/YdjA family.</text>
</comment>
<accession>Q8LFT2</accession>
<accession>Q8LPH8</accession>
<accession>Q8S8A4</accession>
<accession>Q8S943</accession>
<accession>Q9SI47</accession>
<gene>
    <name type="primary">DRP3B</name>
    <name type="synonym">ADL2B</name>
    <name type="ordered locus">At2g14120</name>
    <name type="ORF">T22C12.1</name>
</gene>
<sequence length="780" mass="86644">MSVDDLPPSSASAVTPLGSSVIPIVNKLQDIFAQLGSQSTIALPQVAVVGSQSSGKSSVLEALVGRDFLPRGNDICTRRPLRLQLVQTKPSSDGGSDEEWGEFLHHDPVRRIYDFSEIRREIEAETNRVSGENKGVSDIPIGLKIFSPNVLDISLVDLPGITKVPVGDQPSDIEARIRTMILTYIKEPSCLILAVSPANTDLANSDALQIAGNADPDGHRTIGVITKLDIMDRGTDARNHLLGKTIPLRLGYVGVVNRSQEDILMNRSIKDALVAEEKFFRSRPVYSGLTDRLGVPQLAKKLNQVLVQHIKALLPSLKSRINNALFATAKEYESYGDITESRGGQGALLLSFITKYCEAYSSTLEGKSKEMSTSELSGGARILYIFQSVFVKSLEEVDPCEDLTADDIRTAIQNATGPRSALFVPDVPFEVLVRRQISRLLDPSLQCARFIFDELVKISHQCMMKELQRFPVLQKRMDEVIGNFLREGLEPSQAMIRDLIEMEMDYINTSHPNFIGGTKAVEQAMQTVKSSRIPHPVARPRDTVEPERTASSGSQIKTRSFLGRQANGIITDQAVPTAADAERPAPAGSTSWSGFSSIFRGSDGQAAAKNNLLNKPFSETTQEVYQNLSTIYLKEPPTILKSSETHSEQESVEIEITKLLLKSYYDIVRKNVEDLVPKAIMHFLVNYTKRELHNVFIEKLYRENLIEELLKEPDELAIKRKRTQETLRILQQANRTLDELPLEAESVERGYKIGSEAKHEELPGTRRSRTETNGNGRLHM</sequence>
<dbReference type="EMBL" id="AB072375">
    <property type="protein sequence ID" value="BAB85645.1"/>
    <property type="molecule type" value="mRNA"/>
</dbReference>
<dbReference type="EMBL" id="AC007197">
    <property type="protein sequence ID" value="AAM15450.1"/>
    <property type="molecule type" value="Genomic_DNA"/>
</dbReference>
<dbReference type="EMBL" id="AC007197">
    <property type="protein sequence ID" value="AAD25856.2"/>
    <property type="molecule type" value="Genomic_DNA"/>
</dbReference>
<dbReference type="EMBL" id="CP002685">
    <property type="protein sequence ID" value="AEC06282.1"/>
    <property type="molecule type" value="Genomic_DNA"/>
</dbReference>
<dbReference type="EMBL" id="AY099768">
    <property type="protein sequence ID" value="AAM20619.1"/>
    <property type="molecule type" value="mRNA"/>
</dbReference>
<dbReference type="EMBL" id="AY084657">
    <property type="protein sequence ID" value="AAM61220.1"/>
    <property type="molecule type" value="mRNA"/>
</dbReference>
<dbReference type="PIR" id="D84514">
    <property type="entry name" value="D84514"/>
</dbReference>
<dbReference type="RefSeq" id="NP_565362.1">
    <molecule id="Q8LFT2-1"/>
    <property type="nucleotide sequence ID" value="NM_126984.4"/>
</dbReference>
<dbReference type="SMR" id="Q8LFT2"/>
<dbReference type="BioGRID" id="1258">
    <property type="interactions" value="6"/>
</dbReference>
<dbReference type="FunCoup" id="Q8LFT2">
    <property type="interactions" value="5373"/>
</dbReference>
<dbReference type="IntAct" id="Q8LFT2">
    <property type="interactions" value="2"/>
</dbReference>
<dbReference type="STRING" id="3702.Q8LFT2"/>
<dbReference type="iPTMnet" id="Q8LFT2"/>
<dbReference type="PaxDb" id="3702-AT2G14120.3"/>
<dbReference type="ProteomicsDB" id="224367">
    <molecule id="Q8LFT2-1"/>
</dbReference>
<dbReference type="EnsemblPlants" id="AT2G14120.1">
    <molecule id="Q8LFT2-1"/>
    <property type="protein sequence ID" value="AT2G14120.1"/>
    <property type="gene ID" value="AT2G14120"/>
</dbReference>
<dbReference type="GeneID" id="815898"/>
<dbReference type="Gramene" id="AT2G14120.1">
    <molecule id="Q8LFT2-1"/>
    <property type="protein sequence ID" value="AT2G14120.1"/>
    <property type="gene ID" value="AT2G14120"/>
</dbReference>
<dbReference type="KEGG" id="ath:AT2G14120"/>
<dbReference type="Araport" id="AT2G14120"/>
<dbReference type="TAIR" id="AT2G14120">
    <property type="gene designation" value="DRP3B"/>
</dbReference>
<dbReference type="eggNOG" id="KOG0446">
    <property type="taxonomic scope" value="Eukaryota"/>
</dbReference>
<dbReference type="HOGENOM" id="CLU_008964_5_0_1"/>
<dbReference type="InParanoid" id="Q8LFT2"/>
<dbReference type="PhylomeDB" id="Q8LFT2"/>
<dbReference type="PRO" id="PR:Q8LFT2"/>
<dbReference type="Proteomes" id="UP000006548">
    <property type="component" value="Chromosome 2"/>
</dbReference>
<dbReference type="ExpressionAtlas" id="Q8LFT2">
    <property type="expression patterns" value="baseline and differential"/>
</dbReference>
<dbReference type="GO" id="GO:0005739">
    <property type="term" value="C:mitochondrion"/>
    <property type="evidence" value="ECO:0007669"/>
    <property type="project" value="UniProtKB-SubCell"/>
</dbReference>
<dbReference type="GO" id="GO:0005777">
    <property type="term" value="C:peroxisome"/>
    <property type="evidence" value="ECO:0000314"/>
    <property type="project" value="UniProtKB"/>
</dbReference>
<dbReference type="GO" id="GO:0005525">
    <property type="term" value="F:GTP binding"/>
    <property type="evidence" value="ECO:0007669"/>
    <property type="project" value="UniProtKB-KW"/>
</dbReference>
<dbReference type="GO" id="GO:0003924">
    <property type="term" value="F:GTPase activity"/>
    <property type="evidence" value="ECO:0007669"/>
    <property type="project" value="InterPro"/>
</dbReference>
<dbReference type="GO" id="GO:0051301">
    <property type="term" value="P:cell division"/>
    <property type="evidence" value="ECO:0007669"/>
    <property type="project" value="UniProtKB-KW"/>
</dbReference>
<dbReference type="GO" id="GO:0007031">
    <property type="term" value="P:peroxisome organization"/>
    <property type="evidence" value="ECO:0007669"/>
    <property type="project" value="UniProtKB-KW"/>
</dbReference>
<dbReference type="CDD" id="cd08771">
    <property type="entry name" value="DLP_1"/>
    <property type="match status" value="1"/>
</dbReference>
<dbReference type="FunFam" id="1.20.120.1240:FF:000013">
    <property type="entry name" value="Dynamin-related protein 3A"/>
    <property type="match status" value="1"/>
</dbReference>
<dbReference type="FunFam" id="1.20.120.1240:FF:000018">
    <property type="entry name" value="Dynamin-related protein 3A"/>
    <property type="match status" value="1"/>
</dbReference>
<dbReference type="FunFam" id="3.40.50.300:FF:001027">
    <property type="entry name" value="dynamin-related protein 3A"/>
    <property type="match status" value="1"/>
</dbReference>
<dbReference type="Gene3D" id="1.20.120.1240">
    <property type="entry name" value="Dynamin, middle domain"/>
    <property type="match status" value="2"/>
</dbReference>
<dbReference type="Gene3D" id="3.40.50.300">
    <property type="entry name" value="P-loop containing nucleotide triphosphate hydrolases"/>
    <property type="match status" value="1"/>
</dbReference>
<dbReference type="InterPro" id="IPR022812">
    <property type="entry name" value="Dynamin"/>
</dbReference>
<dbReference type="InterPro" id="IPR001401">
    <property type="entry name" value="Dynamin_GTPase"/>
</dbReference>
<dbReference type="InterPro" id="IPR019762">
    <property type="entry name" value="Dynamin_GTPase_CS"/>
</dbReference>
<dbReference type="InterPro" id="IPR045063">
    <property type="entry name" value="Dynamin_N"/>
</dbReference>
<dbReference type="InterPro" id="IPR000375">
    <property type="entry name" value="Dynamin_stalk"/>
</dbReference>
<dbReference type="InterPro" id="IPR030381">
    <property type="entry name" value="G_DYNAMIN_dom"/>
</dbReference>
<dbReference type="InterPro" id="IPR003130">
    <property type="entry name" value="GED"/>
</dbReference>
<dbReference type="InterPro" id="IPR020850">
    <property type="entry name" value="GED_dom"/>
</dbReference>
<dbReference type="InterPro" id="IPR027417">
    <property type="entry name" value="P-loop_NTPase"/>
</dbReference>
<dbReference type="PANTHER" id="PTHR11566">
    <property type="entry name" value="DYNAMIN"/>
    <property type="match status" value="1"/>
</dbReference>
<dbReference type="PANTHER" id="PTHR11566:SF21">
    <property type="entry name" value="DYNAMIN RELATED PROTEIN 1, ISOFORM A"/>
    <property type="match status" value="1"/>
</dbReference>
<dbReference type="Pfam" id="PF01031">
    <property type="entry name" value="Dynamin_M"/>
    <property type="match status" value="1"/>
</dbReference>
<dbReference type="Pfam" id="PF00350">
    <property type="entry name" value="Dynamin_N"/>
    <property type="match status" value="1"/>
</dbReference>
<dbReference type="Pfam" id="PF02212">
    <property type="entry name" value="GED"/>
    <property type="match status" value="1"/>
</dbReference>
<dbReference type="PRINTS" id="PR00195">
    <property type="entry name" value="DYNAMIN"/>
</dbReference>
<dbReference type="SMART" id="SM00053">
    <property type="entry name" value="DYNc"/>
    <property type="match status" value="1"/>
</dbReference>
<dbReference type="SMART" id="SM00302">
    <property type="entry name" value="GED"/>
    <property type="match status" value="1"/>
</dbReference>
<dbReference type="SUPFAM" id="SSF52540">
    <property type="entry name" value="P-loop containing nucleoside triphosphate hydrolases"/>
    <property type="match status" value="1"/>
</dbReference>
<dbReference type="PROSITE" id="PS00410">
    <property type="entry name" value="G_DYNAMIN_1"/>
    <property type="match status" value="1"/>
</dbReference>
<dbReference type="PROSITE" id="PS51718">
    <property type="entry name" value="G_DYNAMIN_2"/>
    <property type="match status" value="1"/>
</dbReference>
<dbReference type="PROSITE" id="PS51388">
    <property type="entry name" value="GED"/>
    <property type="match status" value="1"/>
</dbReference>
<name>DRP3B_ARATH</name>
<evidence type="ECO:0000250" key="1"/>
<evidence type="ECO:0000255" key="2"/>
<evidence type="ECO:0000255" key="3">
    <source>
        <dbReference type="PROSITE-ProRule" id="PRU00720"/>
    </source>
</evidence>
<evidence type="ECO:0000255" key="4">
    <source>
        <dbReference type="PROSITE-ProRule" id="PRU01055"/>
    </source>
</evidence>
<evidence type="ECO:0000256" key="5">
    <source>
        <dbReference type="SAM" id="MobiDB-lite"/>
    </source>
</evidence>
<evidence type="ECO:0000269" key="6">
    <source>
    </source>
</evidence>
<evidence type="ECO:0000269" key="7">
    <source>
    </source>
</evidence>
<evidence type="ECO:0000269" key="8">
    <source>
    </source>
</evidence>
<evidence type="ECO:0000269" key="9">
    <source>
    </source>
</evidence>
<evidence type="ECO:0000269" key="10">
    <source>
    </source>
</evidence>
<evidence type="ECO:0000303" key="11">
    <source ref="5"/>
</evidence>
<evidence type="ECO:0000305" key="12"/>
<evidence type="ECO:0007744" key="13">
    <source>
    </source>
</evidence>